<name>MRGRG_MOUSE</name>
<reference key="1">
    <citation type="journal article" date="2001" name="Cell">
        <title>A diverse family of GPCRs expressed in specific subsets of nociceptive sensory neurons.</title>
        <authorList>
            <person name="Dong X."/>
            <person name="Han S.-K."/>
            <person name="Zylka M.J."/>
            <person name="Simon M.I."/>
            <person name="Anderson D.J."/>
        </authorList>
    </citation>
    <scope>NUCLEOTIDE SEQUENCE [GENOMIC DNA]</scope>
    <source>
        <strain>C57BL/6J</strain>
    </source>
</reference>
<reference key="2">
    <citation type="journal article" date="2004" name="Genome Res.">
        <title>The status, quality, and expansion of the NIH full-length cDNA project: the Mammalian Gene Collection (MGC).</title>
        <authorList>
            <consortium name="The MGC Project Team"/>
        </authorList>
    </citation>
    <scope>NUCLEOTIDE SEQUENCE [LARGE SCALE MRNA]</scope>
    <source>
        <tissue>Placenta</tissue>
    </source>
</reference>
<reference key="3">
    <citation type="submission" date="2001-07" db="EMBL/GenBank/DDBJ databases">
        <title>The BWS region contains an evolutionary breakpoint region.</title>
        <authorList>
            <person name="Engemann S."/>
            <person name="Stroedicke M."/>
            <person name="Meguro M."/>
            <person name="Franck O."/>
            <person name="Kalscheuer V."/>
            <person name="Oshimura M."/>
            <person name="Walter J."/>
        </authorList>
    </citation>
    <scope>NUCLEOTIDE SEQUENCE [MRNA] OF 1-156</scope>
    <source>
        <strain>C57BL/6J</strain>
    </source>
</reference>
<feature type="chain" id="PRO_0000069768" description="Mas-related G-protein coupled receptor member G">
    <location>
        <begin position="1"/>
        <end position="289"/>
    </location>
</feature>
<feature type="topological domain" description="Extracellular" evidence="1">
    <location>
        <begin position="1"/>
        <end position="13"/>
    </location>
</feature>
<feature type="transmembrane region" description="Helical; Name=1" evidence="1">
    <location>
        <begin position="14"/>
        <end position="34"/>
    </location>
</feature>
<feature type="topological domain" description="Cytoplasmic" evidence="1">
    <location>
        <begin position="35"/>
        <end position="52"/>
    </location>
</feature>
<feature type="transmembrane region" description="Helical; Name=2" evidence="1">
    <location>
        <begin position="53"/>
        <end position="73"/>
    </location>
</feature>
<feature type="topological domain" description="Extracellular" evidence="1">
    <location>
        <begin position="74"/>
        <end position="78"/>
    </location>
</feature>
<feature type="transmembrane region" description="Helical; Name=3" evidence="1">
    <location>
        <begin position="79"/>
        <end position="99"/>
    </location>
</feature>
<feature type="topological domain" description="Cytoplasmic" evidence="1">
    <location>
        <begin position="100"/>
        <end position="120"/>
    </location>
</feature>
<feature type="transmembrane region" description="Helical; Name=4" evidence="1">
    <location>
        <begin position="121"/>
        <end position="141"/>
    </location>
</feature>
<feature type="topological domain" description="Extracellular" evidence="1">
    <location>
        <begin position="142"/>
        <end position="164"/>
    </location>
</feature>
<feature type="transmembrane region" description="Helical; Name=5" evidence="1">
    <location>
        <begin position="165"/>
        <end position="185"/>
    </location>
</feature>
<feature type="topological domain" description="Cytoplasmic" evidence="1">
    <location>
        <begin position="186"/>
        <end position="199"/>
    </location>
</feature>
<feature type="transmembrane region" description="Helical; Name=6" evidence="1">
    <location>
        <begin position="200"/>
        <end position="220"/>
    </location>
</feature>
<feature type="topological domain" description="Extracellular" evidence="1">
    <location>
        <begin position="221"/>
        <end position="222"/>
    </location>
</feature>
<feature type="transmembrane region" description="Helical; Name=7" evidence="1">
    <location>
        <begin position="223"/>
        <end position="243"/>
    </location>
</feature>
<feature type="topological domain" description="Cytoplasmic" evidence="1">
    <location>
        <begin position="244"/>
        <end position="289"/>
    </location>
</feature>
<feature type="sequence conflict" description="In Ref. 3; CAC86130." evidence="2" ref="3">
    <original>T</original>
    <variation>I</variation>
    <location>
        <position position="122"/>
    </location>
</feature>
<accession>Q91ZB5</accession>
<accession>Q498A2</accession>
<accession>Q711N2</accession>
<evidence type="ECO:0000255" key="1"/>
<evidence type="ECO:0000305" key="2"/>
<sequence length="289" mass="32028">MFSIFNIWGTFNKVLFFLSLTVSLAGLVGNALLLWHLGLHIKKGPFNTYLLHLAAADFLFLSCQVGFSIATIVSGHEDTLYFPVTFLWFAVGLWLLAAFSVDCCLAYMFPSFCSPNRRPRFTSVVLCLVIWALTMPAVLLPANACGLLKNGMSLLVCLKYHWTSVTWLAVLSGMACGASKFLLIFGNCCSSQPPPKFCKLAQCSGILLFFCRLPLVVYWCLRPVLKFLLPFFFPLATLLACIDSSAKPLLYYMKGRQLRKDPLQVALNRALGEESQSGLGGLSLPMHQV</sequence>
<keyword id="KW-1003">Cell membrane</keyword>
<keyword id="KW-0297">G-protein coupled receptor</keyword>
<keyword id="KW-0472">Membrane</keyword>
<keyword id="KW-0675">Receptor</keyword>
<keyword id="KW-1185">Reference proteome</keyword>
<keyword id="KW-0807">Transducer</keyword>
<keyword id="KW-0812">Transmembrane</keyword>
<keyword id="KW-1133">Transmembrane helix</keyword>
<gene>
    <name type="primary">Mrgprg</name>
    <name type="synonym">Ebrt2</name>
    <name type="synonym">Gm1098</name>
    <name type="synonym">Mrgg</name>
</gene>
<protein>
    <recommendedName>
        <fullName>Mas-related G-protein coupled receptor member G</fullName>
    </recommendedName>
    <alternativeName>
        <fullName>Evolutionary breakpoint transcript 2 protein</fullName>
    </alternativeName>
</protein>
<comment type="function">
    <text>Orphan receptor. May regulate nociceptor function and/or development, including the sensation or modulation of pain.</text>
</comment>
<comment type="subcellular location">
    <subcellularLocation>
        <location>Cell membrane</location>
        <topology>Multi-pass membrane protein</topology>
    </subcellularLocation>
</comment>
<comment type="similarity">
    <text evidence="2">Belongs to the G-protein coupled receptor 1 family. Mas subfamily.</text>
</comment>
<organism>
    <name type="scientific">Mus musculus</name>
    <name type="common">Mouse</name>
    <dbReference type="NCBI Taxonomy" id="10090"/>
    <lineage>
        <taxon>Eukaryota</taxon>
        <taxon>Metazoa</taxon>
        <taxon>Chordata</taxon>
        <taxon>Craniata</taxon>
        <taxon>Vertebrata</taxon>
        <taxon>Euteleostomi</taxon>
        <taxon>Mammalia</taxon>
        <taxon>Eutheria</taxon>
        <taxon>Euarchontoglires</taxon>
        <taxon>Glires</taxon>
        <taxon>Rodentia</taxon>
        <taxon>Myomorpha</taxon>
        <taxon>Muroidea</taxon>
        <taxon>Muridae</taxon>
        <taxon>Murinae</taxon>
        <taxon>Mus</taxon>
        <taxon>Mus</taxon>
    </lineage>
</organism>
<proteinExistence type="evidence at transcript level"/>
<dbReference type="EMBL" id="AY042212">
    <property type="protein sequence ID" value="AAK91803.1"/>
    <property type="molecule type" value="Genomic_DNA"/>
</dbReference>
<dbReference type="EMBL" id="BC100302">
    <property type="protein sequence ID" value="AAI00303.1"/>
    <property type="molecule type" value="mRNA"/>
</dbReference>
<dbReference type="EMBL" id="AJ313465">
    <property type="protein sequence ID" value="CAC86130.1"/>
    <property type="molecule type" value="mRNA"/>
</dbReference>
<dbReference type="CCDS" id="CCDS22045.1"/>
<dbReference type="RefSeq" id="NP_987077.1">
    <property type="nucleotide sequence ID" value="NM_203492.2"/>
</dbReference>
<dbReference type="SMR" id="Q91ZB5"/>
<dbReference type="STRING" id="10090.ENSMUSP00000060411"/>
<dbReference type="PaxDb" id="10090-ENSMUSP00000060411"/>
<dbReference type="ProteomicsDB" id="291508"/>
<dbReference type="Antibodypedia" id="23325">
    <property type="antibodies" value="42 antibodies from 15 providers"/>
</dbReference>
<dbReference type="DNASU" id="381974"/>
<dbReference type="Ensembl" id="ENSMUST00000058092.8">
    <property type="protein sequence ID" value="ENSMUSP00000060411.7"/>
    <property type="gene ID" value="ENSMUSG00000050276.8"/>
</dbReference>
<dbReference type="GeneID" id="381974"/>
<dbReference type="KEGG" id="mmu:381974"/>
<dbReference type="UCSC" id="uc009kpy.1">
    <property type="organism name" value="mouse"/>
</dbReference>
<dbReference type="AGR" id="MGI:3033145"/>
<dbReference type="CTD" id="386746"/>
<dbReference type="MGI" id="MGI:3033145">
    <property type="gene designation" value="Mrgprg"/>
</dbReference>
<dbReference type="VEuPathDB" id="HostDB:ENSMUSG00000050276"/>
<dbReference type="eggNOG" id="ENOG502TKZP">
    <property type="taxonomic scope" value="Eukaryota"/>
</dbReference>
<dbReference type="GeneTree" id="ENSGT01030000234639"/>
<dbReference type="HOGENOM" id="CLU_009579_4_1_1"/>
<dbReference type="InParanoid" id="Q91ZB5"/>
<dbReference type="OMA" id="NGLVLWH"/>
<dbReference type="OrthoDB" id="9450540at2759"/>
<dbReference type="PhylomeDB" id="Q91ZB5"/>
<dbReference type="TreeFam" id="TF336336"/>
<dbReference type="BioGRID-ORCS" id="381974">
    <property type="hits" value="2 hits in 77 CRISPR screens"/>
</dbReference>
<dbReference type="ChiTaRS" id="Mrgprg">
    <property type="organism name" value="mouse"/>
</dbReference>
<dbReference type="PRO" id="PR:Q91ZB5"/>
<dbReference type="Proteomes" id="UP000000589">
    <property type="component" value="Chromosome 7"/>
</dbReference>
<dbReference type="RNAct" id="Q91ZB5">
    <property type="molecule type" value="protein"/>
</dbReference>
<dbReference type="Bgee" id="ENSMUSG00000050276">
    <property type="expression patterns" value="Expressed in decidua and 11 other cell types or tissues"/>
</dbReference>
<dbReference type="ExpressionAtlas" id="Q91ZB5">
    <property type="expression patterns" value="baseline and differential"/>
</dbReference>
<dbReference type="GO" id="GO:0005886">
    <property type="term" value="C:plasma membrane"/>
    <property type="evidence" value="ECO:0007669"/>
    <property type="project" value="UniProtKB-SubCell"/>
</dbReference>
<dbReference type="GO" id="GO:0004930">
    <property type="term" value="F:G protein-coupled receptor activity"/>
    <property type="evidence" value="ECO:0007669"/>
    <property type="project" value="UniProtKB-KW"/>
</dbReference>
<dbReference type="CDD" id="cd15111">
    <property type="entry name" value="7tmA_MrgprG"/>
    <property type="match status" value="1"/>
</dbReference>
<dbReference type="FunFam" id="1.20.1070.10:FF:000193">
    <property type="entry name" value="Mas-related G-protein coupled receptor member E"/>
    <property type="match status" value="1"/>
</dbReference>
<dbReference type="Gene3D" id="1.20.1070.10">
    <property type="entry name" value="Rhodopsin 7-helix transmembrane proteins"/>
    <property type="match status" value="1"/>
</dbReference>
<dbReference type="InterPro" id="IPR000276">
    <property type="entry name" value="GPCR_Rhodpsn"/>
</dbReference>
<dbReference type="InterPro" id="IPR026234">
    <property type="entry name" value="MRGPCRFAMILY"/>
</dbReference>
<dbReference type="InterPro" id="IPR027336">
    <property type="entry name" value="MRGPCRG"/>
</dbReference>
<dbReference type="PANTHER" id="PTHR11334">
    <property type="entry name" value="MAS-RELATED G-PROTEIN COUPLED RECEPTOR"/>
    <property type="match status" value="1"/>
</dbReference>
<dbReference type="PANTHER" id="PTHR11334:SF32">
    <property type="entry name" value="MAS-RELATED G-PROTEIN COUPLED RECEPTOR MEMBER G"/>
    <property type="match status" value="1"/>
</dbReference>
<dbReference type="PRINTS" id="PR00237">
    <property type="entry name" value="GPCRRHODOPSN"/>
</dbReference>
<dbReference type="PRINTS" id="PR02108">
    <property type="entry name" value="MRGPCRFAMILY"/>
</dbReference>
<dbReference type="SUPFAM" id="SSF81321">
    <property type="entry name" value="Family A G protein-coupled receptor-like"/>
    <property type="match status" value="1"/>
</dbReference>